<gene>
    <name evidence="1" type="primary">rppH</name>
    <name evidence="1" type="synonym">nudH</name>
    <name type="ordered locus">Lferr_1831</name>
</gene>
<name>RPPH_ACIF5</name>
<feature type="chain" id="PRO_1000115262" description="RNA pyrophosphohydrolase">
    <location>
        <begin position="1"/>
        <end position="174"/>
    </location>
</feature>
<feature type="domain" description="Nudix hydrolase" evidence="1">
    <location>
        <begin position="6"/>
        <end position="145"/>
    </location>
</feature>
<feature type="short sequence motif" description="Nudix box">
    <location>
        <begin position="38"/>
        <end position="59"/>
    </location>
</feature>
<proteinExistence type="inferred from homology"/>
<evidence type="ECO:0000255" key="1">
    <source>
        <dbReference type="HAMAP-Rule" id="MF_00298"/>
    </source>
</evidence>
<organism>
    <name type="scientific">Acidithiobacillus ferrooxidans (strain ATCC 53993 / BNL-5-31)</name>
    <name type="common">Leptospirillum ferrooxidans (ATCC 53993)</name>
    <dbReference type="NCBI Taxonomy" id="380394"/>
    <lineage>
        <taxon>Bacteria</taxon>
        <taxon>Pseudomonadati</taxon>
        <taxon>Pseudomonadota</taxon>
        <taxon>Acidithiobacillia</taxon>
        <taxon>Acidithiobacillales</taxon>
        <taxon>Acidithiobacillaceae</taxon>
        <taxon>Acidithiobacillus</taxon>
    </lineage>
</organism>
<protein>
    <recommendedName>
        <fullName evidence="1">RNA pyrophosphohydrolase</fullName>
        <ecNumber evidence="1">3.6.1.-</ecNumber>
    </recommendedName>
    <alternativeName>
        <fullName evidence="1">(Di)nucleoside polyphosphate hydrolase</fullName>
    </alternativeName>
</protein>
<dbReference type="EC" id="3.6.1.-" evidence="1"/>
<dbReference type="EMBL" id="CP001132">
    <property type="protein sequence ID" value="ACH84052.1"/>
    <property type="molecule type" value="Genomic_DNA"/>
</dbReference>
<dbReference type="RefSeq" id="WP_012537028.1">
    <property type="nucleotide sequence ID" value="NC_011206.1"/>
</dbReference>
<dbReference type="SMR" id="B5EKW6"/>
<dbReference type="KEGG" id="afe:Lferr_1831"/>
<dbReference type="eggNOG" id="COG0494">
    <property type="taxonomic scope" value="Bacteria"/>
</dbReference>
<dbReference type="HOGENOM" id="CLU_087195_3_1_6"/>
<dbReference type="GO" id="GO:0005737">
    <property type="term" value="C:cytoplasm"/>
    <property type="evidence" value="ECO:0007669"/>
    <property type="project" value="TreeGrafter"/>
</dbReference>
<dbReference type="GO" id="GO:0034353">
    <property type="term" value="F:mRNA 5'-diphosphatase activity"/>
    <property type="evidence" value="ECO:0007669"/>
    <property type="project" value="TreeGrafter"/>
</dbReference>
<dbReference type="GO" id="GO:0006402">
    <property type="term" value="P:mRNA catabolic process"/>
    <property type="evidence" value="ECO:0007669"/>
    <property type="project" value="TreeGrafter"/>
</dbReference>
<dbReference type="CDD" id="cd03671">
    <property type="entry name" value="NUDIX_Ap4A_hydrolase_plant_like"/>
    <property type="match status" value="1"/>
</dbReference>
<dbReference type="Gene3D" id="3.90.79.10">
    <property type="entry name" value="Nucleoside Triphosphate Pyrophosphohydrolase"/>
    <property type="match status" value="1"/>
</dbReference>
<dbReference type="HAMAP" id="MF_00298">
    <property type="entry name" value="Nudix_RppH"/>
    <property type="match status" value="1"/>
</dbReference>
<dbReference type="InterPro" id="IPR020476">
    <property type="entry name" value="Nudix_hydrolase"/>
</dbReference>
<dbReference type="InterPro" id="IPR015797">
    <property type="entry name" value="NUDIX_hydrolase-like_dom_sf"/>
</dbReference>
<dbReference type="InterPro" id="IPR020084">
    <property type="entry name" value="NUDIX_hydrolase_CS"/>
</dbReference>
<dbReference type="InterPro" id="IPR000086">
    <property type="entry name" value="NUDIX_hydrolase_dom"/>
</dbReference>
<dbReference type="InterPro" id="IPR022927">
    <property type="entry name" value="RppH"/>
</dbReference>
<dbReference type="NCBIfam" id="NF001936">
    <property type="entry name" value="PRK00714.1-3"/>
    <property type="match status" value="1"/>
</dbReference>
<dbReference type="NCBIfam" id="NF001937">
    <property type="entry name" value="PRK00714.1-4"/>
    <property type="match status" value="1"/>
</dbReference>
<dbReference type="NCBIfam" id="NF001938">
    <property type="entry name" value="PRK00714.1-5"/>
    <property type="match status" value="1"/>
</dbReference>
<dbReference type="PANTHER" id="PTHR23114">
    <property type="entry name" value="M7GPPPN-MRNA HYDROLASE"/>
    <property type="match status" value="1"/>
</dbReference>
<dbReference type="PANTHER" id="PTHR23114:SF17">
    <property type="entry name" value="M7GPPPN-MRNA HYDROLASE"/>
    <property type="match status" value="1"/>
</dbReference>
<dbReference type="Pfam" id="PF00293">
    <property type="entry name" value="NUDIX"/>
    <property type="match status" value="1"/>
</dbReference>
<dbReference type="PRINTS" id="PR00502">
    <property type="entry name" value="NUDIXFAMILY"/>
</dbReference>
<dbReference type="SUPFAM" id="SSF55811">
    <property type="entry name" value="Nudix"/>
    <property type="match status" value="1"/>
</dbReference>
<dbReference type="PROSITE" id="PS51462">
    <property type="entry name" value="NUDIX"/>
    <property type="match status" value="1"/>
</dbReference>
<dbReference type="PROSITE" id="PS00893">
    <property type="entry name" value="NUDIX_BOX"/>
    <property type="match status" value="1"/>
</dbReference>
<comment type="function">
    <text evidence="1">Accelerates the degradation of transcripts by removing pyrophosphate from the 5'-end of triphosphorylated RNA, leading to a more labile monophosphorylated state that can stimulate subsequent ribonuclease cleavage.</text>
</comment>
<comment type="cofactor">
    <cofactor evidence="1">
        <name>a divalent metal cation</name>
        <dbReference type="ChEBI" id="CHEBI:60240"/>
    </cofactor>
</comment>
<comment type="similarity">
    <text evidence="1">Belongs to the Nudix hydrolase family. RppH subfamily.</text>
</comment>
<sequence>MIDADGYRPNVGMIICNEQNQVLWAKRRGENAWQFPQGGIDYAETPEQAMFRELEEEVGTAKVCIIGRTRGWLRYEVPCARHRVSRRRYRGQKQIWFLLRFEGEEAEINLRTRQPEFEDWRWVDYWMPVNEIISFKRRVYWQALQELAPLINMNPPPMTDPCRSENRHPVVGNR</sequence>
<keyword id="KW-0378">Hydrolase</keyword>
<reference key="1">
    <citation type="submission" date="2008-08" db="EMBL/GenBank/DDBJ databases">
        <title>Complete sequence of Acidithiobacillus ferrooxidans ATCC 53993.</title>
        <authorList>
            <person name="Lucas S."/>
            <person name="Copeland A."/>
            <person name="Lapidus A."/>
            <person name="Glavina del Rio T."/>
            <person name="Dalin E."/>
            <person name="Tice H."/>
            <person name="Bruce D."/>
            <person name="Goodwin L."/>
            <person name="Pitluck S."/>
            <person name="Sims D."/>
            <person name="Brettin T."/>
            <person name="Detter J.C."/>
            <person name="Han C."/>
            <person name="Kuske C.R."/>
            <person name="Larimer F."/>
            <person name="Land M."/>
            <person name="Hauser L."/>
            <person name="Kyrpides N."/>
            <person name="Lykidis A."/>
            <person name="Borole A.P."/>
        </authorList>
    </citation>
    <scope>NUCLEOTIDE SEQUENCE [LARGE SCALE GENOMIC DNA]</scope>
    <source>
        <strain>ATCC 53993 / BNL-5-31</strain>
    </source>
</reference>
<accession>B5EKW6</accession>